<keyword id="KW-0275">Fatty acid biosynthesis</keyword>
<keyword id="KW-0276">Fatty acid metabolism</keyword>
<keyword id="KW-0444">Lipid biosynthesis</keyword>
<keyword id="KW-0443">Lipid metabolism</keyword>
<keyword id="KW-0496">Mitochondrion</keyword>
<keyword id="KW-0521">NADP</keyword>
<keyword id="KW-0560">Oxidoreductase</keyword>
<keyword id="KW-1185">Reference proteome</keyword>
<keyword id="KW-0809">Transit peptide</keyword>
<name>ETR1_EREGS</name>
<proteinExistence type="inferred from homology"/>
<evidence type="ECO:0000250" key="1"/>
<evidence type="ECO:0000250" key="2">
    <source>
        <dbReference type="UniProtKB" id="P38071"/>
    </source>
</evidence>
<evidence type="ECO:0000250" key="3">
    <source>
        <dbReference type="UniProtKB" id="Q8WZM3"/>
    </source>
</evidence>
<evidence type="ECO:0000255" key="4"/>
<evidence type="ECO:0000305" key="5"/>
<organism>
    <name type="scientific">Eremothecium gossypii (strain ATCC 10895 / CBS 109.51 / FGSC 9923 / NRRL Y-1056)</name>
    <name type="common">Yeast</name>
    <name type="synonym">Ashbya gossypii</name>
    <dbReference type="NCBI Taxonomy" id="284811"/>
    <lineage>
        <taxon>Eukaryota</taxon>
        <taxon>Fungi</taxon>
        <taxon>Dikarya</taxon>
        <taxon>Ascomycota</taxon>
        <taxon>Saccharomycotina</taxon>
        <taxon>Saccharomycetes</taxon>
        <taxon>Saccharomycetales</taxon>
        <taxon>Saccharomycetaceae</taxon>
        <taxon>Eremothecium</taxon>
    </lineage>
</organism>
<dbReference type="EC" id="1.3.1.104"/>
<dbReference type="EMBL" id="AE016818">
    <property type="protein sequence ID" value="AAS52604.2"/>
    <property type="molecule type" value="Genomic_DNA"/>
</dbReference>
<dbReference type="RefSeq" id="NP_984780.2">
    <property type="nucleotide sequence ID" value="NM_210134.2"/>
</dbReference>
<dbReference type="SMR" id="Q757U3"/>
<dbReference type="FunCoup" id="Q757U3">
    <property type="interactions" value="718"/>
</dbReference>
<dbReference type="STRING" id="284811.Q757U3"/>
<dbReference type="EnsemblFungi" id="AAS52604">
    <property type="protein sequence ID" value="AAS52604"/>
    <property type="gene ID" value="AGOS_AEL081W"/>
</dbReference>
<dbReference type="GeneID" id="4620970"/>
<dbReference type="KEGG" id="ago:AGOS_AEL081W"/>
<dbReference type="eggNOG" id="KOG0025">
    <property type="taxonomic scope" value="Eukaryota"/>
</dbReference>
<dbReference type="HOGENOM" id="CLU_026673_17_0_1"/>
<dbReference type="InParanoid" id="Q757U3"/>
<dbReference type="OMA" id="YGYTQSK"/>
<dbReference type="OrthoDB" id="7482721at2759"/>
<dbReference type="Proteomes" id="UP000000591">
    <property type="component" value="Chromosome V"/>
</dbReference>
<dbReference type="GO" id="GO:0005759">
    <property type="term" value="C:mitochondrial matrix"/>
    <property type="evidence" value="ECO:0007669"/>
    <property type="project" value="UniProtKB-SubCell"/>
</dbReference>
<dbReference type="GO" id="GO:0005739">
    <property type="term" value="C:mitochondrion"/>
    <property type="evidence" value="ECO:0000318"/>
    <property type="project" value="GO_Central"/>
</dbReference>
<dbReference type="GO" id="GO:0141148">
    <property type="term" value="F:enoyl-[acyl-carrier-protein] reductase (NADPH) activity"/>
    <property type="evidence" value="ECO:0007669"/>
    <property type="project" value="UniProtKB-EC"/>
</dbReference>
<dbReference type="GO" id="GO:0009060">
    <property type="term" value="P:aerobic respiration"/>
    <property type="evidence" value="ECO:0007669"/>
    <property type="project" value="EnsemblFungi"/>
</dbReference>
<dbReference type="GO" id="GO:0006633">
    <property type="term" value="P:fatty acid biosynthetic process"/>
    <property type="evidence" value="ECO:0007669"/>
    <property type="project" value="UniProtKB-KW"/>
</dbReference>
<dbReference type="GO" id="GO:0006631">
    <property type="term" value="P:fatty acid metabolic process"/>
    <property type="evidence" value="ECO:0000318"/>
    <property type="project" value="GO_Central"/>
</dbReference>
<dbReference type="CDD" id="cd08290">
    <property type="entry name" value="ETR"/>
    <property type="match status" value="1"/>
</dbReference>
<dbReference type="FunFam" id="3.90.180.10:FF:000046">
    <property type="entry name" value="2-enoyl thioester reductase"/>
    <property type="match status" value="1"/>
</dbReference>
<dbReference type="FunFam" id="3.40.50.720:FF:000112">
    <property type="entry name" value="Enoyl-[acyl-carrier-protein] reductase 1, mitochondrial"/>
    <property type="match status" value="1"/>
</dbReference>
<dbReference type="Gene3D" id="3.90.180.10">
    <property type="entry name" value="Medium-chain alcohol dehydrogenases, catalytic domain"/>
    <property type="match status" value="1"/>
</dbReference>
<dbReference type="Gene3D" id="3.40.50.720">
    <property type="entry name" value="NAD(P)-binding Rossmann-like Domain"/>
    <property type="match status" value="1"/>
</dbReference>
<dbReference type="InterPro" id="IPR013154">
    <property type="entry name" value="ADH-like_N"/>
</dbReference>
<dbReference type="InterPro" id="IPR011032">
    <property type="entry name" value="GroES-like_sf"/>
</dbReference>
<dbReference type="InterPro" id="IPR051034">
    <property type="entry name" value="Mito_Enoyl-ACP_Reductase"/>
</dbReference>
<dbReference type="InterPro" id="IPR036291">
    <property type="entry name" value="NAD(P)-bd_dom_sf"/>
</dbReference>
<dbReference type="InterPro" id="IPR020843">
    <property type="entry name" value="PKS_ER"/>
</dbReference>
<dbReference type="PANTHER" id="PTHR43981">
    <property type="entry name" value="ENOYL-[ACYL-CARRIER-PROTEIN] REDUCTASE, MITOCHONDRIAL"/>
    <property type="match status" value="1"/>
</dbReference>
<dbReference type="PANTHER" id="PTHR43981:SF2">
    <property type="entry name" value="ENOYL-[ACYL-CARRIER-PROTEIN] REDUCTASE, MITOCHONDRIAL"/>
    <property type="match status" value="1"/>
</dbReference>
<dbReference type="Pfam" id="PF08240">
    <property type="entry name" value="ADH_N"/>
    <property type="match status" value="1"/>
</dbReference>
<dbReference type="SMART" id="SM00829">
    <property type="entry name" value="PKS_ER"/>
    <property type="match status" value="1"/>
</dbReference>
<dbReference type="SUPFAM" id="SSF50129">
    <property type="entry name" value="GroES-like"/>
    <property type="match status" value="1"/>
</dbReference>
<dbReference type="SUPFAM" id="SSF51735">
    <property type="entry name" value="NAD(P)-binding Rossmann-fold domains"/>
    <property type="match status" value="1"/>
</dbReference>
<sequence>MQALNTTKRLMSTKQFPLFKSLLYSSHDPADCTQVLKVHSYTPKVGADESILLRTLAFPINPSDINQLQGVYPSVPEKTLDYSTEKPAAIAGNEGVFEVMSVPQGERRLAVGDWVIPLYSNTGTWTNYQTCRDAGTLVKVNGLDLYTAATIAVNGCTAYQLVNDYVQWDPSGNEWIVQNAGTSAVSKIVTQVAQARGVKTLSVIRDRENFAEVAKELEERYGATKVISETQNNDKDFSKDELPVILGPNARVRLALNSVGGKSSGAIARKLERDGTMLTYGGMSRQPVTVPTTLLIFNGLKSLGYWITENTKRNPQSKIDTISALMRMYGDGQLQPPEADIKKIEWDVQKMNDEQLLEAVKNGIQSNGKSVVVLKW</sequence>
<feature type="transit peptide" description="Mitochondrion" evidence="4">
    <location>
        <begin position="1"/>
        <end status="unknown"/>
    </location>
</feature>
<feature type="chain" id="PRO_0000000896" description="Enoyl-[acyl-carrier-protein] reductase, mitochondrial">
    <location>
        <begin status="unknown"/>
        <end position="376"/>
    </location>
</feature>
<feature type="active site" description="Proton donor" evidence="3">
    <location>
        <position position="72"/>
    </location>
</feature>
<feature type="binding site" evidence="3">
    <location>
        <position position="154"/>
    </location>
    <ligand>
        <name>NADP(+)</name>
        <dbReference type="ChEBI" id="CHEBI:58349"/>
    </ligand>
</feature>
<feature type="binding site" evidence="3">
    <location>
        <begin position="182"/>
        <end position="185"/>
    </location>
    <ligand>
        <name>NADP(+)</name>
        <dbReference type="ChEBI" id="CHEBI:58349"/>
    </ligand>
</feature>
<feature type="binding site" evidence="3">
    <location>
        <begin position="205"/>
        <end position="207"/>
    </location>
    <ligand>
        <name>NADP(+)</name>
        <dbReference type="ChEBI" id="CHEBI:58349"/>
    </ligand>
</feature>
<feature type="binding site" evidence="3">
    <location>
        <begin position="280"/>
        <end position="283"/>
    </location>
    <ligand>
        <name>NADP(+)</name>
        <dbReference type="ChEBI" id="CHEBI:58349"/>
    </ligand>
</feature>
<feature type="binding site" evidence="3">
    <location>
        <begin position="305"/>
        <end position="307"/>
    </location>
    <ligand>
        <name>NADP(+)</name>
        <dbReference type="ChEBI" id="CHEBI:58349"/>
    </ligand>
</feature>
<feature type="binding site" evidence="1">
    <location>
        <position position="369"/>
    </location>
    <ligand>
        <name>NADP(+)</name>
        <dbReference type="ChEBI" id="CHEBI:58349"/>
    </ligand>
</feature>
<accession>Q757U3</accession>
<reference key="1">
    <citation type="journal article" date="2004" name="Science">
        <title>The Ashbya gossypii genome as a tool for mapping the ancient Saccharomyces cerevisiae genome.</title>
        <authorList>
            <person name="Dietrich F.S."/>
            <person name="Voegeli S."/>
            <person name="Brachat S."/>
            <person name="Lerch A."/>
            <person name="Gates K."/>
            <person name="Steiner S."/>
            <person name="Mohr C."/>
            <person name="Poehlmann R."/>
            <person name="Luedi P."/>
            <person name="Choi S."/>
            <person name="Wing R.A."/>
            <person name="Flavier A."/>
            <person name="Gaffney T.D."/>
            <person name="Philippsen P."/>
        </authorList>
    </citation>
    <scope>NUCLEOTIDE SEQUENCE [LARGE SCALE GENOMIC DNA]</scope>
    <source>
        <strain>ATCC 10895 / CBS 109.51 / FGSC 9923 / NRRL Y-1056</strain>
    </source>
</reference>
<reference key="2">
    <citation type="journal article" date="2013" name="G3 (Bethesda)">
        <title>Genomes of Ashbya fungi isolated from insects reveal four mating-type loci, numerous translocations, lack of transposons, and distinct gene duplications.</title>
        <authorList>
            <person name="Dietrich F.S."/>
            <person name="Voegeli S."/>
            <person name="Kuo S."/>
            <person name="Philippsen P."/>
        </authorList>
    </citation>
    <scope>GENOME REANNOTATION</scope>
    <scope>SEQUENCE REVISION TO 324</scope>
    <source>
        <strain>ATCC 10895 / CBS 109.51 / FGSC 9923 / NRRL Y-1056</strain>
    </source>
</reference>
<comment type="function">
    <text evidence="2">Catalyzes the NADPH-dependent reduction of trans-2-enoyl thioesters in mitochondrial fatty acid synthesis (fatty acid synthesis type II). Fatty acid chain elongation in mitochondria uses acyl carrier protein (ACP) as an acyl group carrier, but the enzyme accepts both ACP and CoA thioesters as substrates in vitro. Required for respiration and the maintenance of the mitochondrial compartment.</text>
</comment>
<comment type="catalytic activity">
    <reaction evidence="2">
        <text>a 2,3-saturated acyl-[ACP] + NADP(+) = a (2E)-enoyl-[ACP] + NADPH + H(+)</text>
        <dbReference type="Rhea" id="RHEA:22564"/>
        <dbReference type="Rhea" id="RHEA-COMP:9925"/>
        <dbReference type="Rhea" id="RHEA-COMP:9926"/>
        <dbReference type="ChEBI" id="CHEBI:15378"/>
        <dbReference type="ChEBI" id="CHEBI:57783"/>
        <dbReference type="ChEBI" id="CHEBI:58349"/>
        <dbReference type="ChEBI" id="CHEBI:78784"/>
        <dbReference type="ChEBI" id="CHEBI:78785"/>
        <dbReference type="EC" id="1.3.1.104"/>
    </reaction>
</comment>
<comment type="subunit">
    <text evidence="3">Homodimer.</text>
</comment>
<comment type="subcellular location">
    <subcellularLocation>
        <location evidence="2">Mitochondrion matrix</location>
    </subcellularLocation>
</comment>
<comment type="similarity">
    <text evidence="5">Belongs to the zinc-containing alcohol dehydrogenase family. Quinone oxidoreductase subfamily.</text>
</comment>
<protein>
    <recommendedName>
        <fullName>Enoyl-[acyl-carrier-protein] reductase, mitochondrial</fullName>
        <ecNumber>1.3.1.104</ecNumber>
    </recommendedName>
    <alternativeName>
        <fullName>2-enoyl thioester reductase</fullName>
    </alternativeName>
</protein>
<gene>
    <name type="primary">ETR1</name>
    <name type="ordered locus">AEL081W</name>
</gene>